<name>RS18_EHRCJ</name>
<keyword id="KW-0687">Ribonucleoprotein</keyword>
<keyword id="KW-0689">Ribosomal protein</keyword>
<keyword id="KW-0694">RNA-binding</keyword>
<keyword id="KW-0699">rRNA-binding</keyword>
<sequence>MLKKNKKANSNNSNATAYSPLAYLKRPYFKRSKACPLEQCPNEDIDYKNKTLLSKFTSEYGRILPSRITSVSSRKQRLLSTAVKRARYLALLPYC</sequence>
<accession>Q3YRC9</accession>
<protein>
    <recommendedName>
        <fullName evidence="1">Small ribosomal subunit protein bS18</fullName>
    </recommendedName>
    <alternativeName>
        <fullName evidence="2">30S ribosomal protein S18</fullName>
    </alternativeName>
</protein>
<dbReference type="EMBL" id="CP000107">
    <property type="protein sequence ID" value="AAZ68726.1"/>
    <property type="molecule type" value="Genomic_DNA"/>
</dbReference>
<dbReference type="RefSeq" id="WP_011304803.1">
    <property type="nucleotide sequence ID" value="NC_007354.1"/>
</dbReference>
<dbReference type="SMR" id="Q3YRC9"/>
<dbReference type="FunCoup" id="Q3YRC9">
    <property type="interactions" value="324"/>
</dbReference>
<dbReference type="STRING" id="269484.Ecaj_0694"/>
<dbReference type="KEGG" id="ecn:Ecaj_0694"/>
<dbReference type="eggNOG" id="COG0238">
    <property type="taxonomic scope" value="Bacteria"/>
</dbReference>
<dbReference type="HOGENOM" id="CLU_148710_2_1_5"/>
<dbReference type="InParanoid" id="Q3YRC9"/>
<dbReference type="Proteomes" id="UP000000435">
    <property type="component" value="Chromosome"/>
</dbReference>
<dbReference type="GO" id="GO:0022627">
    <property type="term" value="C:cytosolic small ribosomal subunit"/>
    <property type="evidence" value="ECO:0007669"/>
    <property type="project" value="TreeGrafter"/>
</dbReference>
<dbReference type="GO" id="GO:0070181">
    <property type="term" value="F:small ribosomal subunit rRNA binding"/>
    <property type="evidence" value="ECO:0007669"/>
    <property type="project" value="TreeGrafter"/>
</dbReference>
<dbReference type="GO" id="GO:0003735">
    <property type="term" value="F:structural constituent of ribosome"/>
    <property type="evidence" value="ECO:0007669"/>
    <property type="project" value="InterPro"/>
</dbReference>
<dbReference type="GO" id="GO:0006412">
    <property type="term" value="P:translation"/>
    <property type="evidence" value="ECO:0007669"/>
    <property type="project" value="UniProtKB-UniRule"/>
</dbReference>
<dbReference type="Gene3D" id="4.10.640.10">
    <property type="entry name" value="Ribosomal protein S18"/>
    <property type="match status" value="1"/>
</dbReference>
<dbReference type="HAMAP" id="MF_00270">
    <property type="entry name" value="Ribosomal_bS18"/>
    <property type="match status" value="1"/>
</dbReference>
<dbReference type="InterPro" id="IPR001648">
    <property type="entry name" value="Ribosomal_bS18"/>
</dbReference>
<dbReference type="InterPro" id="IPR036870">
    <property type="entry name" value="Ribosomal_bS18_sf"/>
</dbReference>
<dbReference type="NCBIfam" id="TIGR00165">
    <property type="entry name" value="S18"/>
    <property type="match status" value="1"/>
</dbReference>
<dbReference type="PANTHER" id="PTHR13479">
    <property type="entry name" value="30S RIBOSOMAL PROTEIN S18"/>
    <property type="match status" value="1"/>
</dbReference>
<dbReference type="PANTHER" id="PTHR13479:SF40">
    <property type="entry name" value="SMALL RIBOSOMAL SUBUNIT PROTEIN BS18M"/>
    <property type="match status" value="1"/>
</dbReference>
<dbReference type="Pfam" id="PF01084">
    <property type="entry name" value="Ribosomal_S18"/>
    <property type="match status" value="1"/>
</dbReference>
<dbReference type="PRINTS" id="PR00974">
    <property type="entry name" value="RIBOSOMALS18"/>
</dbReference>
<dbReference type="SUPFAM" id="SSF46911">
    <property type="entry name" value="Ribosomal protein S18"/>
    <property type="match status" value="1"/>
</dbReference>
<comment type="function">
    <text evidence="1">Binds as a heterodimer with protein bS6 to the central domain of the 16S rRNA, where it helps stabilize the platform of the 30S subunit.</text>
</comment>
<comment type="subunit">
    <text evidence="1">Part of the 30S ribosomal subunit. Forms a tight heterodimer with protein bS6.</text>
</comment>
<comment type="similarity">
    <text evidence="1">Belongs to the bacterial ribosomal protein bS18 family.</text>
</comment>
<proteinExistence type="inferred from homology"/>
<reference key="1">
    <citation type="journal article" date="2006" name="J. Bacteriol.">
        <title>The genome of the obligately intracellular bacterium Ehrlichia canis reveals themes of complex membrane structure and immune evasion strategies.</title>
        <authorList>
            <person name="Mavromatis K."/>
            <person name="Doyle C.K."/>
            <person name="Lykidis A."/>
            <person name="Ivanova N."/>
            <person name="Francino M.P."/>
            <person name="Chain P."/>
            <person name="Shin M."/>
            <person name="Malfatti S."/>
            <person name="Larimer F."/>
            <person name="Copeland A."/>
            <person name="Detter J.C."/>
            <person name="Land M."/>
            <person name="Richardson P.M."/>
            <person name="Yu X.J."/>
            <person name="Walker D.H."/>
            <person name="McBride J.W."/>
            <person name="Kyrpides N.C."/>
        </authorList>
    </citation>
    <scope>NUCLEOTIDE SEQUENCE [LARGE SCALE GENOMIC DNA]</scope>
    <source>
        <strain>Jake</strain>
    </source>
</reference>
<evidence type="ECO:0000255" key="1">
    <source>
        <dbReference type="HAMAP-Rule" id="MF_00270"/>
    </source>
</evidence>
<evidence type="ECO:0000305" key="2"/>
<feature type="chain" id="PRO_0000345462" description="Small ribosomal subunit protein bS18">
    <location>
        <begin position="1"/>
        <end position="95"/>
    </location>
</feature>
<organism>
    <name type="scientific">Ehrlichia canis (strain Jake)</name>
    <dbReference type="NCBI Taxonomy" id="269484"/>
    <lineage>
        <taxon>Bacteria</taxon>
        <taxon>Pseudomonadati</taxon>
        <taxon>Pseudomonadota</taxon>
        <taxon>Alphaproteobacteria</taxon>
        <taxon>Rickettsiales</taxon>
        <taxon>Anaplasmataceae</taxon>
        <taxon>Ehrlichia</taxon>
    </lineage>
</organism>
<gene>
    <name evidence="1" type="primary">rpsR</name>
    <name type="ordered locus">Ecaj_0694</name>
</gene>